<keyword id="KW-0521">NADP</keyword>
<keyword id="KW-0560">Oxidoreductase</keyword>
<keyword id="KW-1185">Reference proteome</keyword>
<gene>
    <name evidence="5" type="primary">virD</name>
    <name type="ORF">TRIVIDRAFT_225746</name>
</gene>
<accession>G9N4A9</accession>
<organism>
    <name type="scientific">Hypocrea virens (strain Gv29-8 / FGSC 10586)</name>
    <name type="common">Gliocladium virens</name>
    <name type="synonym">Trichoderma virens</name>
    <dbReference type="NCBI Taxonomy" id="413071"/>
    <lineage>
        <taxon>Eukaryota</taxon>
        <taxon>Fungi</taxon>
        <taxon>Dikarya</taxon>
        <taxon>Ascomycota</taxon>
        <taxon>Pezizomycotina</taxon>
        <taxon>Sordariomycetes</taxon>
        <taxon>Hypocreomycetidae</taxon>
        <taxon>Hypocreales</taxon>
        <taxon>Hypocreaceae</taxon>
        <taxon>Trichoderma</taxon>
    </lineage>
</organism>
<proteinExistence type="evidence at protein level"/>
<feature type="chain" id="PRO_0000449281" description="Short-chain dehydrogenase virD">
    <location>
        <begin position="1"/>
        <end position="287"/>
    </location>
</feature>
<feature type="active site" description="Proton acceptor" evidence="3">
    <location>
        <position position="149"/>
    </location>
</feature>
<feature type="active site" description="Lowers pKa of active site Tyr" evidence="2">
    <location>
        <position position="153"/>
    </location>
</feature>
<feature type="binding site" evidence="1">
    <location>
        <position position="10"/>
    </location>
    <ligand>
        <name>NADP(+)</name>
        <dbReference type="ChEBI" id="CHEBI:58349"/>
    </ligand>
</feature>
<feature type="binding site" evidence="1">
    <location>
        <position position="36"/>
    </location>
    <ligand>
        <name>NADP(+)</name>
        <dbReference type="ChEBI" id="CHEBI:58349"/>
    </ligand>
</feature>
<feature type="binding site" evidence="1">
    <location>
        <position position="57"/>
    </location>
    <ligand>
        <name>NADP(+)</name>
        <dbReference type="ChEBI" id="CHEBI:58349"/>
    </ligand>
</feature>
<feature type="binding site" evidence="2">
    <location>
        <position position="85"/>
    </location>
    <ligand>
        <name>NADP(+)</name>
        <dbReference type="ChEBI" id="CHEBI:58349"/>
    </ligand>
</feature>
<feature type="binding site" evidence="2">
    <location>
        <position position="149"/>
    </location>
    <ligand>
        <name>NADP(+)</name>
        <dbReference type="ChEBI" id="CHEBI:58349"/>
    </ligand>
</feature>
<feature type="binding site" evidence="2">
    <location>
        <position position="153"/>
    </location>
    <ligand>
        <name>NADP(+)</name>
        <dbReference type="ChEBI" id="CHEBI:58349"/>
    </ligand>
</feature>
<feature type="binding site" evidence="2">
    <location>
        <position position="182"/>
    </location>
    <ligand>
        <name>NADP(+)</name>
        <dbReference type="ChEBI" id="CHEBI:58349"/>
    </ligand>
</feature>
<feature type="binding site" evidence="1">
    <location>
        <position position="184"/>
    </location>
    <ligand>
        <name>NADP(+)</name>
        <dbReference type="ChEBI" id="CHEBI:58349"/>
    </ligand>
</feature>
<comment type="function">
    <text evidence="4">Short-chain dehydrogenase; part of the gene cluster that mediates the biosynthesis of virensols and trichoxide, fungal natural products that contain or are derived from a salicylaldehyde core (PubMed:31790246). The pathway begins with the synthesis of the reduced chain in virensol C by the highly reducing polyketide synthase virA via condensation of one acetate and 8 malonate units (PubMed:31790246). VirA has interesting programming rules since the first 2 ketides are fully reduced, the 3 following ketides undergo beta-dehydration, and the last 3 ketides are only reduced to beta-hydroxys to yield the trihydroxy portion (PubMed:31790246). The production of aldehyde virensol C by virA alone is surprising, since virA does not contain a reductase (R) domain that is typically associated with reductive product release in HRPKS (PubMed:31790246). The cupin-domain enzyme virC is involved in enhancing virA product turnover (PubMed:31790246). The short-chain dehydrogenase virB then oxidizes the C-7 alcohol of virensol C to a ketone, yielding virensol D (PubMed:31790246). Virensol D is further transformed to salicylaldehyde 5-deoxyaurocitrin by the short-chain dehydrogenase virD (PubMed:31790246). VirD catalyzes the dehydrogenation of C-3 to form the beta-ketone aldehyde, which is followed by the generation of the nucleophilic C-2 that is required for the intramolecular aldol condensation between C-2 and C-7, itself followed by dehydration and aromatization which leads to salicylaldehyde 5-deoxyaurocitrin (PubMed:31790246). While the dehydrogenation of virensol D is definitely catalyzed by virD, the aldol condensation and dehydration may be uncatalyzed or assisted by virD (PubMed:31790246). The short chain dehydrogenase virG then converts salicylaldehyde 5-deoxyaurocitrin into virensol B which is further hydroxylated by the cytochrome P450 monooxygenase virE to yield the hydroquinone virensol A (PubMed:31790246). VirI then may oxidize virensol A to form the quinone, while virH performs the epoxidation (PubMed:31790246). Finally, the two remaining short-chain dehydrogenases, virK and virL, are probably responsible for reducing the ketones to the corresponding alcohols to furnish the epoxycyclohexanol structure in trichoxide (PubMed:31790246).</text>
</comment>
<comment type="pathway">
    <text evidence="4">Secondary metabolite biosynthesis.</text>
</comment>
<comment type="similarity">
    <text evidence="6">Belongs to the short-chain dehydrogenases/reductases (SDR) family.</text>
</comment>
<evidence type="ECO:0000250" key="1">
    <source>
        <dbReference type="UniProtKB" id="L0E2Z4"/>
    </source>
</evidence>
<evidence type="ECO:0000250" key="2">
    <source>
        <dbReference type="UniProtKB" id="O93868"/>
    </source>
</evidence>
<evidence type="ECO:0000255" key="3">
    <source>
        <dbReference type="PROSITE-ProRule" id="PRU10001"/>
    </source>
</evidence>
<evidence type="ECO:0000269" key="4">
    <source>
    </source>
</evidence>
<evidence type="ECO:0000303" key="5">
    <source>
    </source>
</evidence>
<evidence type="ECO:0000305" key="6"/>
<name>VIRD_HYPVG</name>
<sequence>MTRDQKFALVTGCGKGGIGEALILEYTRRGIYAIATVLPTENSDHLTAAGITWFPLDVTDEQSVVDLKKSIASVTDGYLDFLVNNAGICYTMTAIDTDVSAVKRMFDVNVFGPMRMVHHFHDMLIQATGTIVNIGSIGGVVPYMYGASYNASKAALHHYSNTLRLEMSPFNVKVLTVISGEVGTNILKNDVHRNLPEGSYYSPLAVEFRDHVQRTPKTTSRFEYAENVVAQSLKSSPAAWFWTGSATGIIRFLDMFAWRTIWDFFFYREFNLGKVKDAYLANLKKDM</sequence>
<dbReference type="EC" id="1.1.1.-" evidence="4"/>
<dbReference type="EMBL" id="ABDF02000086">
    <property type="protein sequence ID" value="EHK18435.1"/>
    <property type="molecule type" value="Genomic_DNA"/>
</dbReference>
<dbReference type="RefSeq" id="XP_013952635.1">
    <property type="nucleotide sequence ID" value="XM_014097160.1"/>
</dbReference>
<dbReference type="SMR" id="G9N4A9"/>
<dbReference type="STRING" id="413071.G9N4A9"/>
<dbReference type="EnsemblFungi" id="EHK18435">
    <property type="protein sequence ID" value="EHK18435"/>
    <property type="gene ID" value="TRIVIDRAFT_225746"/>
</dbReference>
<dbReference type="GeneID" id="25791968"/>
<dbReference type="VEuPathDB" id="FungiDB:TRIVIDRAFT_225746"/>
<dbReference type="eggNOG" id="KOG1209">
    <property type="taxonomic scope" value="Eukaryota"/>
</dbReference>
<dbReference type="HOGENOM" id="CLU_010194_2_9_1"/>
<dbReference type="InParanoid" id="G9N4A9"/>
<dbReference type="OMA" id="FAWRTIW"/>
<dbReference type="OrthoDB" id="2102561at2759"/>
<dbReference type="Proteomes" id="UP000007115">
    <property type="component" value="Unassembled WGS sequence"/>
</dbReference>
<dbReference type="GO" id="GO:0005783">
    <property type="term" value="C:endoplasmic reticulum"/>
    <property type="evidence" value="ECO:0007669"/>
    <property type="project" value="TreeGrafter"/>
</dbReference>
<dbReference type="GO" id="GO:0005811">
    <property type="term" value="C:lipid droplet"/>
    <property type="evidence" value="ECO:0007669"/>
    <property type="project" value="TreeGrafter"/>
</dbReference>
<dbReference type="GO" id="GO:0000140">
    <property type="term" value="F:acylglycerone-phosphate reductase (NADP+) activity"/>
    <property type="evidence" value="ECO:0007669"/>
    <property type="project" value="TreeGrafter"/>
</dbReference>
<dbReference type="GO" id="GO:0004806">
    <property type="term" value="F:triacylglycerol lipase activity"/>
    <property type="evidence" value="ECO:0007669"/>
    <property type="project" value="TreeGrafter"/>
</dbReference>
<dbReference type="GO" id="GO:0006654">
    <property type="term" value="P:phosphatidic acid biosynthetic process"/>
    <property type="evidence" value="ECO:0007669"/>
    <property type="project" value="TreeGrafter"/>
</dbReference>
<dbReference type="GO" id="GO:0019433">
    <property type="term" value="P:triglyceride catabolic process"/>
    <property type="evidence" value="ECO:0007669"/>
    <property type="project" value="TreeGrafter"/>
</dbReference>
<dbReference type="CDD" id="cd05374">
    <property type="entry name" value="17beta-HSD-like_SDR_c"/>
    <property type="match status" value="1"/>
</dbReference>
<dbReference type="Gene3D" id="3.40.50.720">
    <property type="entry name" value="NAD(P)-binding Rossmann-like Domain"/>
    <property type="match status" value="1"/>
</dbReference>
<dbReference type="InterPro" id="IPR036291">
    <property type="entry name" value="NAD(P)-bd_dom_sf"/>
</dbReference>
<dbReference type="InterPro" id="IPR020904">
    <property type="entry name" value="Sc_DH/Rdtase_CS"/>
</dbReference>
<dbReference type="InterPro" id="IPR002347">
    <property type="entry name" value="SDR_fam"/>
</dbReference>
<dbReference type="PANTHER" id="PTHR44169">
    <property type="entry name" value="NADPH-DEPENDENT 1-ACYLDIHYDROXYACETONE PHOSPHATE REDUCTASE"/>
    <property type="match status" value="1"/>
</dbReference>
<dbReference type="PANTHER" id="PTHR44169:SF3">
    <property type="entry name" value="SHORT-CHAIN DEHYDROGENASE SRDE"/>
    <property type="match status" value="1"/>
</dbReference>
<dbReference type="Pfam" id="PF00106">
    <property type="entry name" value="adh_short"/>
    <property type="match status" value="1"/>
</dbReference>
<dbReference type="PRINTS" id="PR00081">
    <property type="entry name" value="GDHRDH"/>
</dbReference>
<dbReference type="PRINTS" id="PR00080">
    <property type="entry name" value="SDRFAMILY"/>
</dbReference>
<dbReference type="SUPFAM" id="SSF51735">
    <property type="entry name" value="NAD(P)-binding Rossmann-fold domains"/>
    <property type="match status" value="1"/>
</dbReference>
<dbReference type="PROSITE" id="PS00061">
    <property type="entry name" value="ADH_SHORT"/>
    <property type="match status" value="1"/>
</dbReference>
<reference key="1">
    <citation type="journal article" date="2011" name="Genome Biol.">
        <title>Comparative genome sequence analysis underscores mycoparasitism as the ancestral life style of Trichoderma.</title>
        <authorList>
            <person name="Kubicek C.P."/>
            <person name="Herrera-Estrella A."/>
            <person name="Seidl-Seiboth V."/>
            <person name="Martinez D.A."/>
            <person name="Druzhinina I.S."/>
            <person name="Thon M."/>
            <person name="Zeilinger S."/>
            <person name="Casas-Flores S."/>
            <person name="Horwitz B.A."/>
            <person name="Mukherjee P.K."/>
            <person name="Mukherjee M."/>
            <person name="Kredics L."/>
            <person name="Alcaraz L.D."/>
            <person name="Aerts A."/>
            <person name="Antal Z."/>
            <person name="Atanasova L."/>
            <person name="Cervantes-Badillo M.G."/>
            <person name="Challacombe J."/>
            <person name="Chertkov O."/>
            <person name="McCluskey K."/>
            <person name="Coulpier F."/>
            <person name="Deshpande N."/>
            <person name="von Doehren H."/>
            <person name="Ebbole D.J."/>
            <person name="Esquivel-Naranjo E.U."/>
            <person name="Fekete E."/>
            <person name="Flipphi M."/>
            <person name="Glaser F."/>
            <person name="Gomez-Rodriguez E.Y."/>
            <person name="Gruber S."/>
            <person name="Han C."/>
            <person name="Henrissat B."/>
            <person name="Hermosa R."/>
            <person name="Hernandez-Onate M."/>
            <person name="Karaffa L."/>
            <person name="Kosti I."/>
            <person name="Le Crom S."/>
            <person name="Lindquist E."/>
            <person name="Lucas S."/>
            <person name="Luebeck M."/>
            <person name="Luebeck P.S."/>
            <person name="Margeot A."/>
            <person name="Metz B."/>
            <person name="Misra M."/>
            <person name="Nevalainen H."/>
            <person name="Omann M."/>
            <person name="Packer N."/>
            <person name="Perrone G."/>
            <person name="Uresti-Rivera E.E."/>
            <person name="Salamov A."/>
            <person name="Schmoll M."/>
            <person name="Seiboth B."/>
            <person name="Shapiro H."/>
            <person name="Sukno S."/>
            <person name="Tamayo-Ramos J.A."/>
            <person name="Tisch D."/>
            <person name="Wiest A."/>
            <person name="Wilkinson H.H."/>
            <person name="Zhang M."/>
            <person name="Coutinho P.M."/>
            <person name="Kenerley C.M."/>
            <person name="Monte E."/>
            <person name="Baker S.E."/>
            <person name="Grigoriev I.V."/>
        </authorList>
    </citation>
    <scope>NUCLEOTIDE SEQUENCE [LARGE SCALE GENOMIC DNA]</scope>
    <source>
        <strain>Gv29-8 / FGSC 10586</strain>
    </source>
</reference>
<reference key="2">
    <citation type="journal article" date="2019" name="J. Am. Chem. Soc.">
        <title>Fungal highly reducing polyketide synthases biosynthesize salicylaldehydes that are precursors to epoxycyclohexenol natural products.</title>
        <authorList>
            <person name="Liu L."/>
            <person name="Tang M.C."/>
            <person name="Tang Y."/>
        </authorList>
    </citation>
    <scope>FUNCTION</scope>
    <scope>CATALYTIC ACTIVITY</scope>
    <scope>PATHWAY</scope>
</reference>
<protein>
    <recommendedName>
        <fullName evidence="5">Short-chain dehydrogenase virD</fullName>
        <ecNumber evidence="4">1.1.1.-</ecNumber>
    </recommendedName>
    <alternativeName>
        <fullName evidence="5">Trichoxide biosynthesis protein virD</fullName>
    </alternativeName>
    <alternativeName>
        <fullName evidence="5">Virensol biosynthesis cluster protein D</fullName>
    </alternativeName>
</protein>